<evidence type="ECO:0000255" key="1">
    <source>
        <dbReference type="HAMAP-Rule" id="MF_00008"/>
    </source>
</evidence>
<organism>
    <name type="scientific">Serratia proteamaculans (strain 568)</name>
    <dbReference type="NCBI Taxonomy" id="399741"/>
    <lineage>
        <taxon>Bacteria</taxon>
        <taxon>Pseudomonadati</taxon>
        <taxon>Pseudomonadota</taxon>
        <taxon>Gammaproteobacteria</taxon>
        <taxon>Enterobacterales</taxon>
        <taxon>Yersiniaceae</taxon>
        <taxon>Serratia</taxon>
    </lineage>
</organism>
<dbReference type="EC" id="2.1.1.45" evidence="1"/>
<dbReference type="EMBL" id="CP000826">
    <property type="protein sequence ID" value="ABV42917.1"/>
    <property type="molecule type" value="Genomic_DNA"/>
</dbReference>
<dbReference type="SMR" id="A8GIH7"/>
<dbReference type="STRING" id="399741.Spro_3821"/>
<dbReference type="KEGG" id="spe:Spro_3821"/>
<dbReference type="eggNOG" id="COG0207">
    <property type="taxonomic scope" value="Bacteria"/>
</dbReference>
<dbReference type="HOGENOM" id="CLU_021669_0_0_6"/>
<dbReference type="OrthoDB" id="9774633at2"/>
<dbReference type="UniPathway" id="UPA00575"/>
<dbReference type="GO" id="GO:0005829">
    <property type="term" value="C:cytosol"/>
    <property type="evidence" value="ECO:0007669"/>
    <property type="project" value="TreeGrafter"/>
</dbReference>
<dbReference type="GO" id="GO:0004799">
    <property type="term" value="F:thymidylate synthase activity"/>
    <property type="evidence" value="ECO:0007669"/>
    <property type="project" value="UniProtKB-UniRule"/>
</dbReference>
<dbReference type="GO" id="GO:0006231">
    <property type="term" value="P:dTMP biosynthetic process"/>
    <property type="evidence" value="ECO:0007669"/>
    <property type="project" value="UniProtKB-UniRule"/>
</dbReference>
<dbReference type="GO" id="GO:0006235">
    <property type="term" value="P:dTTP biosynthetic process"/>
    <property type="evidence" value="ECO:0007669"/>
    <property type="project" value="UniProtKB-UniRule"/>
</dbReference>
<dbReference type="GO" id="GO:0032259">
    <property type="term" value="P:methylation"/>
    <property type="evidence" value="ECO:0007669"/>
    <property type="project" value="UniProtKB-KW"/>
</dbReference>
<dbReference type="CDD" id="cd00351">
    <property type="entry name" value="TS_Pyrimidine_HMase"/>
    <property type="match status" value="1"/>
</dbReference>
<dbReference type="FunFam" id="3.30.572.10:FF:000001">
    <property type="entry name" value="Thymidylate synthase"/>
    <property type="match status" value="1"/>
</dbReference>
<dbReference type="Gene3D" id="3.30.572.10">
    <property type="entry name" value="Thymidylate synthase/dCMP hydroxymethylase domain"/>
    <property type="match status" value="1"/>
</dbReference>
<dbReference type="HAMAP" id="MF_00008">
    <property type="entry name" value="Thymidy_synth_bact"/>
    <property type="match status" value="1"/>
</dbReference>
<dbReference type="InterPro" id="IPR045097">
    <property type="entry name" value="Thymidate_synth/dCMP_Mease"/>
</dbReference>
<dbReference type="InterPro" id="IPR023451">
    <property type="entry name" value="Thymidate_synth/dCMP_Mease_dom"/>
</dbReference>
<dbReference type="InterPro" id="IPR036926">
    <property type="entry name" value="Thymidate_synth/dCMP_Mease_sf"/>
</dbReference>
<dbReference type="InterPro" id="IPR000398">
    <property type="entry name" value="Thymidylate_synthase"/>
</dbReference>
<dbReference type="InterPro" id="IPR020940">
    <property type="entry name" value="Thymidylate_synthase_AS"/>
</dbReference>
<dbReference type="NCBIfam" id="NF002497">
    <property type="entry name" value="PRK01827.1-3"/>
    <property type="match status" value="1"/>
</dbReference>
<dbReference type="NCBIfam" id="NF002499">
    <property type="entry name" value="PRK01827.1-5"/>
    <property type="match status" value="1"/>
</dbReference>
<dbReference type="NCBIfam" id="TIGR03284">
    <property type="entry name" value="thym_sym"/>
    <property type="match status" value="2"/>
</dbReference>
<dbReference type="PANTHER" id="PTHR11548:SF9">
    <property type="entry name" value="THYMIDYLATE SYNTHASE"/>
    <property type="match status" value="1"/>
</dbReference>
<dbReference type="PANTHER" id="PTHR11548">
    <property type="entry name" value="THYMIDYLATE SYNTHASE 1"/>
    <property type="match status" value="1"/>
</dbReference>
<dbReference type="Pfam" id="PF00303">
    <property type="entry name" value="Thymidylat_synt"/>
    <property type="match status" value="1"/>
</dbReference>
<dbReference type="PRINTS" id="PR00108">
    <property type="entry name" value="THYMDSNTHASE"/>
</dbReference>
<dbReference type="SUPFAM" id="SSF55831">
    <property type="entry name" value="Thymidylate synthase/dCMP hydroxymethylase"/>
    <property type="match status" value="1"/>
</dbReference>
<dbReference type="PROSITE" id="PS00091">
    <property type="entry name" value="THYMIDYLATE_SYNTHASE"/>
    <property type="match status" value="1"/>
</dbReference>
<proteinExistence type="inferred from homology"/>
<keyword id="KW-0963">Cytoplasm</keyword>
<keyword id="KW-0489">Methyltransferase</keyword>
<keyword id="KW-0545">Nucleotide biosynthesis</keyword>
<keyword id="KW-0808">Transferase</keyword>
<name>TYSY_SERP5</name>
<comment type="function">
    <text evidence="1">Catalyzes the reductive methylation of 2'-deoxyuridine-5'-monophosphate (dUMP) to 2'-deoxythymidine-5'-monophosphate (dTMP) while utilizing 5,10-methylenetetrahydrofolate (mTHF) as the methyl donor and reductant in the reaction, yielding dihydrofolate (DHF) as a by-product. This enzymatic reaction provides an intracellular de novo source of dTMP, an essential precursor for DNA biosynthesis.</text>
</comment>
<comment type="catalytic activity">
    <reaction evidence="1">
        <text>dUMP + (6R)-5,10-methylene-5,6,7,8-tetrahydrofolate = 7,8-dihydrofolate + dTMP</text>
        <dbReference type="Rhea" id="RHEA:12104"/>
        <dbReference type="ChEBI" id="CHEBI:15636"/>
        <dbReference type="ChEBI" id="CHEBI:57451"/>
        <dbReference type="ChEBI" id="CHEBI:63528"/>
        <dbReference type="ChEBI" id="CHEBI:246422"/>
        <dbReference type="EC" id="2.1.1.45"/>
    </reaction>
</comment>
<comment type="pathway">
    <text evidence="1">Pyrimidine metabolism; dTTP biosynthesis.</text>
</comment>
<comment type="subunit">
    <text evidence="1">Homodimer.</text>
</comment>
<comment type="subcellular location">
    <subcellularLocation>
        <location evidence="1">Cytoplasm</location>
    </subcellularLocation>
</comment>
<comment type="similarity">
    <text evidence="1">Belongs to the thymidylate synthase family. Bacterial-type ThyA subfamily.</text>
</comment>
<reference key="1">
    <citation type="submission" date="2007-09" db="EMBL/GenBank/DDBJ databases">
        <title>Complete sequence of chromosome of Serratia proteamaculans 568.</title>
        <authorList>
            <consortium name="US DOE Joint Genome Institute"/>
            <person name="Copeland A."/>
            <person name="Lucas S."/>
            <person name="Lapidus A."/>
            <person name="Barry K."/>
            <person name="Glavina del Rio T."/>
            <person name="Dalin E."/>
            <person name="Tice H."/>
            <person name="Pitluck S."/>
            <person name="Chain P."/>
            <person name="Malfatti S."/>
            <person name="Shin M."/>
            <person name="Vergez L."/>
            <person name="Schmutz J."/>
            <person name="Larimer F."/>
            <person name="Land M."/>
            <person name="Hauser L."/>
            <person name="Kyrpides N."/>
            <person name="Kim E."/>
            <person name="Taghavi S."/>
            <person name="Newman L."/>
            <person name="Vangronsveld J."/>
            <person name="van der Lelie D."/>
            <person name="Richardson P."/>
        </authorList>
    </citation>
    <scope>NUCLEOTIDE SEQUENCE [LARGE SCALE GENOMIC DNA]</scope>
    <source>
        <strain>568</strain>
    </source>
</reference>
<gene>
    <name evidence="1" type="primary">thyA</name>
    <name type="ordered locus">Spro_3821</name>
</gene>
<sequence>MKQYLDLMNKVLAEGTPKADRTGTGTLSIFGHQMRFNLQEGFPLVTTKKCHLRSIIHELLWFLNGDTNVAYLKENKVSIWDEWADENGNLGPVYGKQWRAWGTADGRQIDQLTTVLNQLKQDPDSRRIIVSAWNVGELDQMALAPCHAFFQFYVADGKLSCQLYQRSCDVFLGLPFNIASYALLVHMMAQQCDLEVGDFVWTGGDTHLYSNHMEQTQLQLTREPRALPKLVIKRKPASLFDYRFEDFEIEGYDPHPAIKAPVAI</sequence>
<protein>
    <recommendedName>
        <fullName evidence="1">Thymidylate synthase</fullName>
        <shortName evidence="1">TS</shortName>
        <shortName evidence="1">TSase</shortName>
        <ecNumber evidence="1">2.1.1.45</ecNumber>
    </recommendedName>
</protein>
<accession>A8GIH7</accession>
<feature type="chain" id="PRO_1000057062" description="Thymidylate synthase">
    <location>
        <begin position="1"/>
        <end position="264"/>
    </location>
</feature>
<feature type="active site" description="Nucleophile" evidence="1">
    <location>
        <position position="146"/>
    </location>
</feature>
<feature type="binding site" description="in other chain" evidence="1">
    <location>
        <position position="21"/>
    </location>
    <ligand>
        <name>dUMP</name>
        <dbReference type="ChEBI" id="CHEBI:246422"/>
        <note>ligand shared between dimeric partners</note>
    </ligand>
</feature>
<feature type="binding site" evidence="1">
    <location>
        <position position="51"/>
    </location>
    <ligand>
        <name>(6R)-5,10-methylene-5,6,7,8-tetrahydrofolate</name>
        <dbReference type="ChEBI" id="CHEBI:15636"/>
    </ligand>
</feature>
<feature type="binding site" evidence="1">
    <location>
        <begin position="126"/>
        <end position="127"/>
    </location>
    <ligand>
        <name>dUMP</name>
        <dbReference type="ChEBI" id="CHEBI:246422"/>
        <note>ligand shared between dimeric partners</note>
    </ligand>
</feature>
<feature type="binding site" description="in other chain" evidence="1">
    <location>
        <begin position="166"/>
        <end position="169"/>
    </location>
    <ligand>
        <name>dUMP</name>
        <dbReference type="ChEBI" id="CHEBI:246422"/>
        <note>ligand shared between dimeric partners</note>
    </ligand>
</feature>
<feature type="binding site" evidence="1">
    <location>
        <position position="169"/>
    </location>
    <ligand>
        <name>(6R)-5,10-methylene-5,6,7,8-tetrahydrofolate</name>
        <dbReference type="ChEBI" id="CHEBI:15636"/>
    </ligand>
</feature>
<feature type="binding site" description="in other chain" evidence="1">
    <location>
        <position position="177"/>
    </location>
    <ligand>
        <name>dUMP</name>
        <dbReference type="ChEBI" id="CHEBI:246422"/>
        <note>ligand shared between dimeric partners</note>
    </ligand>
</feature>
<feature type="binding site" description="in other chain" evidence="1">
    <location>
        <begin position="207"/>
        <end position="209"/>
    </location>
    <ligand>
        <name>dUMP</name>
        <dbReference type="ChEBI" id="CHEBI:246422"/>
        <note>ligand shared between dimeric partners</note>
    </ligand>
</feature>
<feature type="binding site" evidence="1">
    <location>
        <position position="263"/>
    </location>
    <ligand>
        <name>(6R)-5,10-methylene-5,6,7,8-tetrahydrofolate</name>
        <dbReference type="ChEBI" id="CHEBI:15636"/>
    </ligand>
</feature>